<proteinExistence type="inferred from homology"/>
<reference key="1">
    <citation type="submission" date="2007-05" db="EMBL/GenBank/DDBJ databases">
        <title>Complete sequence of Thermosipho melanesiensis BI429.</title>
        <authorList>
            <consortium name="US DOE Joint Genome Institute"/>
            <person name="Copeland A."/>
            <person name="Lucas S."/>
            <person name="Lapidus A."/>
            <person name="Barry K."/>
            <person name="Glavina del Rio T."/>
            <person name="Dalin E."/>
            <person name="Tice H."/>
            <person name="Pitluck S."/>
            <person name="Chertkov O."/>
            <person name="Brettin T."/>
            <person name="Bruce D."/>
            <person name="Detter J.C."/>
            <person name="Han C."/>
            <person name="Schmutz J."/>
            <person name="Larimer F."/>
            <person name="Land M."/>
            <person name="Hauser L."/>
            <person name="Kyrpides N."/>
            <person name="Mikhailova N."/>
            <person name="Nelson K."/>
            <person name="Gogarten J.P."/>
            <person name="Noll K."/>
            <person name="Richardson P."/>
        </authorList>
    </citation>
    <scope>NUCLEOTIDE SEQUENCE [LARGE SCALE GENOMIC DNA]</scope>
    <source>
        <strain>DSM 12029 / CIP 104789 / BI429</strain>
    </source>
</reference>
<keyword id="KW-0963">Cytoplasm</keyword>
<keyword id="KW-0378">Hydrolase</keyword>
<keyword id="KW-0645">Protease</keyword>
<keyword id="KW-0788">Thiol protease</keyword>
<feature type="chain" id="PRO_1000050152" description="Pyrrolidone-carboxylate peptidase">
    <location>
        <begin position="1"/>
        <end position="202"/>
    </location>
</feature>
<feature type="active site" evidence="1">
    <location>
        <position position="78"/>
    </location>
</feature>
<feature type="active site" evidence="1">
    <location>
        <position position="141"/>
    </location>
</feature>
<feature type="active site" evidence="1">
    <location>
        <position position="165"/>
    </location>
</feature>
<comment type="function">
    <text evidence="1">Removes 5-oxoproline from various penultimate amino acid residues except L-proline.</text>
</comment>
<comment type="catalytic activity">
    <reaction evidence="1">
        <text>Release of an N-terminal pyroglutamyl group from a polypeptide, the second amino acid generally not being Pro.</text>
        <dbReference type="EC" id="3.4.19.3"/>
    </reaction>
</comment>
<comment type="subunit">
    <text evidence="1">Homotetramer.</text>
</comment>
<comment type="subcellular location">
    <subcellularLocation>
        <location evidence="1">Cytoplasm</location>
    </subcellularLocation>
</comment>
<comment type="similarity">
    <text evidence="1">Belongs to the peptidase C15 family.</text>
</comment>
<sequence>MKVLVTGFEPFNGETINPSFEAIKMLPDEVEGAKIIKAKLPTVFRKSLCELEELISKENPDIVICVGQAAGRSKISIERVAINIDDAEINDNEGNKPKDEKIFVDGENAYFSNLPIKLMVKTIKEHNIPAEISNSAGTYVCNHVFYGLMYLIDKKFKNLKGGFIHVPFSHNQVLEKKNVPSMSLEDITNGLFYAIKGVLSEK</sequence>
<accession>A6LL24</accession>
<protein>
    <recommendedName>
        <fullName evidence="1">Pyrrolidone-carboxylate peptidase</fullName>
        <ecNumber evidence="1">3.4.19.3</ecNumber>
    </recommendedName>
    <alternativeName>
        <fullName evidence="1">5-oxoprolyl-peptidase</fullName>
    </alternativeName>
    <alternativeName>
        <fullName evidence="1">Pyroglutamyl-peptidase I</fullName>
        <shortName evidence="1">PGP-I</shortName>
        <shortName evidence="1">Pyrase</shortName>
    </alternativeName>
</protein>
<gene>
    <name evidence="1" type="primary">pcp</name>
    <name type="ordered locus">Tmel_0762</name>
</gene>
<organism>
    <name type="scientific">Thermosipho melanesiensis (strain DSM 12029 / CIP 104789 / BI429)</name>
    <dbReference type="NCBI Taxonomy" id="391009"/>
    <lineage>
        <taxon>Bacteria</taxon>
        <taxon>Thermotogati</taxon>
        <taxon>Thermotogota</taxon>
        <taxon>Thermotogae</taxon>
        <taxon>Thermotogales</taxon>
        <taxon>Fervidobacteriaceae</taxon>
        <taxon>Thermosipho</taxon>
    </lineage>
</organism>
<name>PCP_THEM4</name>
<evidence type="ECO:0000255" key="1">
    <source>
        <dbReference type="HAMAP-Rule" id="MF_00417"/>
    </source>
</evidence>
<dbReference type="EC" id="3.4.19.3" evidence="1"/>
<dbReference type="EMBL" id="CP000716">
    <property type="protein sequence ID" value="ABR30625.1"/>
    <property type="molecule type" value="Genomic_DNA"/>
</dbReference>
<dbReference type="RefSeq" id="WP_012056986.1">
    <property type="nucleotide sequence ID" value="NC_009616.1"/>
</dbReference>
<dbReference type="SMR" id="A6LL24"/>
<dbReference type="STRING" id="391009.Tmel_0762"/>
<dbReference type="MEROPS" id="C15.001"/>
<dbReference type="KEGG" id="tme:Tmel_0762"/>
<dbReference type="eggNOG" id="COG2039">
    <property type="taxonomic scope" value="Bacteria"/>
</dbReference>
<dbReference type="HOGENOM" id="CLU_043960_4_0_0"/>
<dbReference type="OrthoDB" id="9779738at2"/>
<dbReference type="Proteomes" id="UP000001110">
    <property type="component" value="Chromosome"/>
</dbReference>
<dbReference type="GO" id="GO:0005829">
    <property type="term" value="C:cytosol"/>
    <property type="evidence" value="ECO:0007669"/>
    <property type="project" value="InterPro"/>
</dbReference>
<dbReference type="GO" id="GO:0016920">
    <property type="term" value="F:pyroglutamyl-peptidase activity"/>
    <property type="evidence" value="ECO:0007669"/>
    <property type="project" value="UniProtKB-UniRule"/>
</dbReference>
<dbReference type="GO" id="GO:0006508">
    <property type="term" value="P:proteolysis"/>
    <property type="evidence" value="ECO:0007669"/>
    <property type="project" value="UniProtKB-KW"/>
</dbReference>
<dbReference type="CDD" id="cd00501">
    <property type="entry name" value="Peptidase_C15"/>
    <property type="match status" value="1"/>
</dbReference>
<dbReference type="FunFam" id="3.40.630.20:FF:000001">
    <property type="entry name" value="Pyrrolidone-carboxylate peptidase"/>
    <property type="match status" value="1"/>
</dbReference>
<dbReference type="Gene3D" id="3.40.630.20">
    <property type="entry name" value="Peptidase C15, pyroglutamyl peptidase I-like"/>
    <property type="match status" value="1"/>
</dbReference>
<dbReference type="HAMAP" id="MF_00417">
    <property type="entry name" value="Pyrrolid_peptidase"/>
    <property type="match status" value="1"/>
</dbReference>
<dbReference type="InterPro" id="IPR000816">
    <property type="entry name" value="Peptidase_C15"/>
</dbReference>
<dbReference type="InterPro" id="IPR016125">
    <property type="entry name" value="Peptidase_C15-like"/>
</dbReference>
<dbReference type="InterPro" id="IPR036440">
    <property type="entry name" value="Peptidase_C15-like_sf"/>
</dbReference>
<dbReference type="InterPro" id="IPR029762">
    <property type="entry name" value="PGP-I_bact-type"/>
</dbReference>
<dbReference type="InterPro" id="IPR033694">
    <property type="entry name" value="PGPEP1_Cys_AS"/>
</dbReference>
<dbReference type="InterPro" id="IPR033693">
    <property type="entry name" value="PGPEP1_Glu_AS"/>
</dbReference>
<dbReference type="NCBIfam" id="NF009676">
    <property type="entry name" value="PRK13197.1"/>
    <property type="match status" value="1"/>
</dbReference>
<dbReference type="NCBIfam" id="TIGR00504">
    <property type="entry name" value="pyro_pdase"/>
    <property type="match status" value="1"/>
</dbReference>
<dbReference type="PANTHER" id="PTHR23402">
    <property type="entry name" value="PROTEASE FAMILY C15 PYROGLUTAMYL-PEPTIDASE I-RELATED"/>
    <property type="match status" value="1"/>
</dbReference>
<dbReference type="PANTHER" id="PTHR23402:SF1">
    <property type="entry name" value="PYROGLUTAMYL-PEPTIDASE I"/>
    <property type="match status" value="1"/>
</dbReference>
<dbReference type="Pfam" id="PF01470">
    <property type="entry name" value="Peptidase_C15"/>
    <property type="match status" value="1"/>
</dbReference>
<dbReference type="PIRSF" id="PIRSF015592">
    <property type="entry name" value="Prld-crbxl_pptds"/>
    <property type="match status" value="1"/>
</dbReference>
<dbReference type="PRINTS" id="PR00706">
    <property type="entry name" value="PYROGLUPTASE"/>
</dbReference>
<dbReference type="SUPFAM" id="SSF53182">
    <property type="entry name" value="Pyrrolidone carboxyl peptidase (pyroglutamate aminopeptidase)"/>
    <property type="match status" value="1"/>
</dbReference>
<dbReference type="PROSITE" id="PS01334">
    <property type="entry name" value="PYRASE_CYS"/>
    <property type="match status" value="1"/>
</dbReference>
<dbReference type="PROSITE" id="PS01333">
    <property type="entry name" value="PYRASE_GLU"/>
    <property type="match status" value="1"/>
</dbReference>